<reference key="1">
    <citation type="journal article" date="2000" name="Nature">
        <title>Sequence and analysis of chromosome 3 of the plant Arabidopsis thaliana.</title>
        <authorList>
            <person name="Salanoubat M."/>
            <person name="Lemcke K."/>
            <person name="Rieger M."/>
            <person name="Ansorge W."/>
            <person name="Unseld M."/>
            <person name="Fartmann B."/>
            <person name="Valle G."/>
            <person name="Bloecker H."/>
            <person name="Perez-Alonso M."/>
            <person name="Obermaier B."/>
            <person name="Delseny M."/>
            <person name="Boutry M."/>
            <person name="Grivell L.A."/>
            <person name="Mache R."/>
            <person name="Puigdomenech P."/>
            <person name="De Simone V."/>
            <person name="Choisne N."/>
            <person name="Artiguenave F."/>
            <person name="Robert C."/>
            <person name="Brottier P."/>
            <person name="Wincker P."/>
            <person name="Cattolico L."/>
            <person name="Weissenbach J."/>
            <person name="Saurin W."/>
            <person name="Quetier F."/>
            <person name="Schaefer M."/>
            <person name="Mueller-Auer S."/>
            <person name="Gabel C."/>
            <person name="Fuchs M."/>
            <person name="Benes V."/>
            <person name="Wurmbach E."/>
            <person name="Drzonek H."/>
            <person name="Erfle H."/>
            <person name="Jordan N."/>
            <person name="Bangert S."/>
            <person name="Wiedelmann R."/>
            <person name="Kranz H."/>
            <person name="Voss H."/>
            <person name="Holland R."/>
            <person name="Brandt P."/>
            <person name="Nyakatura G."/>
            <person name="Vezzi A."/>
            <person name="D'Angelo M."/>
            <person name="Pallavicini A."/>
            <person name="Toppo S."/>
            <person name="Simionati B."/>
            <person name="Conrad A."/>
            <person name="Hornischer K."/>
            <person name="Kauer G."/>
            <person name="Loehnert T.-H."/>
            <person name="Nordsiek G."/>
            <person name="Reichelt J."/>
            <person name="Scharfe M."/>
            <person name="Schoen O."/>
            <person name="Bargues M."/>
            <person name="Terol J."/>
            <person name="Climent J."/>
            <person name="Navarro P."/>
            <person name="Collado C."/>
            <person name="Perez-Perez A."/>
            <person name="Ottenwaelder B."/>
            <person name="Duchemin D."/>
            <person name="Cooke R."/>
            <person name="Laudie M."/>
            <person name="Berger-Llauro C."/>
            <person name="Purnelle B."/>
            <person name="Masuy D."/>
            <person name="de Haan M."/>
            <person name="Maarse A.C."/>
            <person name="Alcaraz J.-P."/>
            <person name="Cottet A."/>
            <person name="Casacuberta E."/>
            <person name="Monfort A."/>
            <person name="Argiriou A."/>
            <person name="Flores M."/>
            <person name="Liguori R."/>
            <person name="Vitale D."/>
            <person name="Mannhaupt G."/>
            <person name="Haase D."/>
            <person name="Schoof H."/>
            <person name="Rudd S."/>
            <person name="Zaccaria P."/>
            <person name="Mewes H.-W."/>
            <person name="Mayer K.F.X."/>
            <person name="Kaul S."/>
            <person name="Town C.D."/>
            <person name="Koo H.L."/>
            <person name="Tallon L.J."/>
            <person name="Jenkins J."/>
            <person name="Rooney T."/>
            <person name="Rizzo M."/>
            <person name="Walts A."/>
            <person name="Utterback T."/>
            <person name="Fujii C.Y."/>
            <person name="Shea T.P."/>
            <person name="Creasy T.H."/>
            <person name="Haas B."/>
            <person name="Maiti R."/>
            <person name="Wu D."/>
            <person name="Peterson J."/>
            <person name="Van Aken S."/>
            <person name="Pai G."/>
            <person name="Militscher J."/>
            <person name="Sellers P."/>
            <person name="Gill J.E."/>
            <person name="Feldblyum T.V."/>
            <person name="Preuss D."/>
            <person name="Lin X."/>
            <person name="Nierman W.C."/>
            <person name="Salzberg S.L."/>
            <person name="White O."/>
            <person name="Venter J.C."/>
            <person name="Fraser C.M."/>
            <person name="Kaneko T."/>
            <person name="Nakamura Y."/>
            <person name="Sato S."/>
            <person name="Kato T."/>
            <person name="Asamizu E."/>
            <person name="Sasamoto S."/>
            <person name="Kimura T."/>
            <person name="Idesawa K."/>
            <person name="Kawashima K."/>
            <person name="Kishida Y."/>
            <person name="Kiyokawa C."/>
            <person name="Kohara M."/>
            <person name="Matsumoto M."/>
            <person name="Matsuno A."/>
            <person name="Muraki A."/>
            <person name="Nakayama S."/>
            <person name="Nakazaki N."/>
            <person name="Shinpo S."/>
            <person name="Takeuchi C."/>
            <person name="Wada T."/>
            <person name="Watanabe A."/>
            <person name="Yamada M."/>
            <person name="Yasuda M."/>
            <person name="Tabata S."/>
        </authorList>
    </citation>
    <scope>NUCLEOTIDE SEQUENCE [LARGE SCALE GENOMIC DNA]</scope>
    <source>
        <strain>cv. Columbia</strain>
    </source>
</reference>
<reference key="2">
    <citation type="journal article" date="2017" name="Plant J.">
        <title>Araport11: a complete reannotation of the Arabidopsis thaliana reference genome.</title>
        <authorList>
            <person name="Cheng C.Y."/>
            <person name="Krishnakumar V."/>
            <person name="Chan A.P."/>
            <person name="Thibaud-Nissen F."/>
            <person name="Schobel S."/>
            <person name="Town C.D."/>
        </authorList>
    </citation>
    <scope>GENOME REANNOTATION</scope>
    <source>
        <strain>cv. Columbia</strain>
    </source>
</reference>
<reference key="3">
    <citation type="journal article" date="2004" name="Plant Physiol.">
        <title>Identification of genes required for embryo development in Arabidopsis.</title>
        <authorList>
            <person name="Tzafrir I."/>
            <person name="Pena-Muralla R."/>
            <person name="Dickerman A."/>
            <person name="Berg M."/>
            <person name="Rogers R."/>
            <person name="Hutchens S."/>
            <person name="Sweeney T.C."/>
            <person name="McElver J."/>
            <person name="Aux G."/>
            <person name="Patton D."/>
            <person name="Meinke D."/>
        </authorList>
    </citation>
    <scope>DISRUPTION PHENOTYPE [LARGE SCALE ANALYSIS]</scope>
    <source>
        <strain>cv. Columbia</strain>
    </source>
</reference>
<reference key="4">
    <citation type="journal article" date="2017" name="New Phytol.">
        <title>A mRNA methylation in Arabidopsis reveals a role for the conserved E3 ubiquitin ligase HAKAI.</title>
        <authorList>
            <person name="Ruzicka K."/>
            <person name="Zhang M."/>
            <person name="Campilho A."/>
            <person name="Bodi Z."/>
            <person name="Kashif M."/>
            <person name="Saleh M."/>
            <person name="Eeckhout D."/>
            <person name="El-Showk S."/>
            <person name="Li H."/>
            <person name="Zhong S."/>
            <person name="De Jaeger G."/>
            <person name="Mongan N.P."/>
            <person name="Hejatko J."/>
            <person name="Helariutta Y."/>
            <person name="Fray R.G."/>
        </authorList>
    </citation>
    <scope>FUNCTION</scope>
    <scope>IDENTIFICATION BY MASS SPECTROMETRY</scope>
    <scope>INTERACTION WITH MTB; FIP37 AND HAKAI</scope>
    <scope>SUBCELLULAR LOCATION</scope>
</reference>
<organism>
    <name type="scientific">Arabidopsis thaliana</name>
    <name type="common">Mouse-ear cress</name>
    <dbReference type="NCBI Taxonomy" id="3702"/>
    <lineage>
        <taxon>Eukaryota</taxon>
        <taxon>Viridiplantae</taxon>
        <taxon>Streptophyta</taxon>
        <taxon>Embryophyta</taxon>
        <taxon>Tracheophyta</taxon>
        <taxon>Spermatophyta</taxon>
        <taxon>Magnoliopsida</taxon>
        <taxon>eudicotyledons</taxon>
        <taxon>Gunneridae</taxon>
        <taxon>Pentapetalae</taxon>
        <taxon>rosids</taxon>
        <taxon>malvids</taxon>
        <taxon>Brassicales</taxon>
        <taxon>Brassicaceae</taxon>
        <taxon>Camelineae</taxon>
        <taxon>Arabidopsis</taxon>
    </lineage>
</organism>
<gene>
    <name evidence="4" type="primary">VIR</name>
    <name evidence="3" type="synonym">EMB2016</name>
    <name evidence="6" type="ordered locus">At3g05680</name>
    <name evidence="7" type="ORF">F18C1.5</name>
</gene>
<comment type="function">
    <text evidence="2">Subunit of the N6-methyltransferase complex, a multiprotein complex that mediates N6-methyladenosine (m6A) methylation at the 5'-[AG]GAC-3' consensus sites of some mRNAs (PubMed:28503769). Associates with MTA, MTB, FIP37 and HAKAI to form the m6A writer complex which is essential for adenosine methylation at specific mRNA sequences (PubMed:28503769). N6-methyladenosine (m6A) plays a role in mRNA stability, processing, translation efficiency and editing (PubMed:28503769).</text>
</comment>
<comment type="subunit">
    <text evidence="2">Interacts with MTB, FIP37 and HAKAI (PubMed:28503769). Associates with MTA, MTB, FIP37 and HAKAI to form the m6A writer complex which is essential for adenosine methylation at specific mRNA sequences (PubMed:28503769).</text>
</comment>
<comment type="subcellular location">
    <subcellularLocation>
        <location evidence="2">Nucleus speckle</location>
    </subcellularLocation>
    <subcellularLocation>
        <location evidence="2">Nucleus</location>
        <location evidence="2">Nucleoplasm</location>
    </subcellularLocation>
</comment>
<comment type="disruption phenotype">
    <text evidence="2">Embryonic lethality due to embryo development arrest at globular stage.</text>
</comment>
<comment type="miscellaneous">
    <text evidence="2">Plants silencing VIR exhibit pleiotropic phenotypes, including aberrant root cap formation, gravity response and lateral root development, and defective development of cotyledons.</text>
</comment>
<comment type="similarity">
    <text evidence="5">Belongs to the vir family.</text>
</comment>
<comment type="sequence caution" evidence="5">
    <conflict type="erroneous gene model prediction">
        <sequence resource="EMBL-CDS" id="AAF26129"/>
    </conflict>
</comment>
<proteinExistence type="evidence at protein level"/>
<evidence type="ECO:0000256" key="1">
    <source>
        <dbReference type="SAM" id="MobiDB-lite"/>
    </source>
</evidence>
<evidence type="ECO:0000269" key="2">
    <source>
    </source>
</evidence>
<evidence type="ECO:0000303" key="3">
    <source>
    </source>
</evidence>
<evidence type="ECO:0000303" key="4">
    <source>
    </source>
</evidence>
<evidence type="ECO:0000305" key="5"/>
<evidence type="ECO:0000312" key="6">
    <source>
        <dbReference type="Araport" id="AT3G05680"/>
    </source>
</evidence>
<evidence type="ECO:0000312" key="7">
    <source>
        <dbReference type="EMBL" id="AAF26129.1"/>
    </source>
</evidence>
<feature type="chain" id="PRO_0000445520" description="Protein virilizer homolog">
    <location>
        <begin position="1"/>
        <end position="2138"/>
    </location>
</feature>
<feature type="region of interest" description="Disordered" evidence="1">
    <location>
        <begin position="1503"/>
        <end position="1574"/>
    </location>
</feature>
<feature type="region of interest" description="Disordered" evidence="1">
    <location>
        <begin position="1638"/>
        <end position="1664"/>
    </location>
</feature>
<feature type="region of interest" description="Disordered" evidence="1">
    <location>
        <begin position="1855"/>
        <end position="1881"/>
    </location>
</feature>
<feature type="region of interest" description="Disordered" evidence="1">
    <location>
        <begin position="2013"/>
        <end position="2035"/>
    </location>
</feature>
<feature type="region of interest" description="Disordered" evidence="1">
    <location>
        <begin position="2058"/>
        <end position="2094"/>
    </location>
</feature>
<feature type="compositionally biased region" description="Polar residues" evidence="1">
    <location>
        <begin position="1528"/>
        <end position="1541"/>
    </location>
</feature>
<feature type="compositionally biased region" description="Polar residues" evidence="1">
    <location>
        <begin position="1862"/>
        <end position="1881"/>
    </location>
</feature>
<feature type="compositionally biased region" description="Polar residues" evidence="1">
    <location>
        <begin position="2025"/>
        <end position="2035"/>
    </location>
</feature>
<dbReference type="EMBL" id="AC011620">
    <property type="protein sequence ID" value="AAF26129.1"/>
    <property type="status" value="ALT_SEQ"/>
    <property type="molecule type" value="Genomic_DNA"/>
</dbReference>
<dbReference type="EMBL" id="CP002686">
    <property type="protein sequence ID" value="AEE74277.1"/>
    <property type="molecule type" value="Genomic_DNA"/>
</dbReference>
<dbReference type="EMBL" id="CP002686">
    <property type="protein sequence ID" value="AEE74278.2"/>
    <property type="molecule type" value="Genomic_DNA"/>
</dbReference>
<dbReference type="RefSeq" id="NP_001319481.1">
    <property type="nucleotide sequence ID" value="NM_001337599.1"/>
</dbReference>
<dbReference type="RefSeq" id="NP_187219.5">
    <property type="nucleotide sequence ID" value="NM_111442.7"/>
</dbReference>
<dbReference type="FunCoup" id="F4J8G7">
    <property type="interactions" value="1162"/>
</dbReference>
<dbReference type="STRING" id="3702.F4J8G7"/>
<dbReference type="GlyGen" id="F4J8G7">
    <property type="glycosylation" value="3 sites, 1 O-linked glycan (3 sites)"/>
</dbReference>
<dbReference type="iPTMnet" id="F4J8G7"/>
<dbReference type="PaxDb" id="3702-AT3G05680.2"/>
<dbReference type="ProMEX" id="F4J8G7"/>
<dbReference type="ProteomicsDB" id="242319"/>
<dbReference type="EnsemblPlants" id="AT3G05680.1">
    <property type="protein sequence ID" value="AT3G05680.1"/>
    <property type="gene ID" value="AT3G05680"/>
</dbReference>
<dbReference type="EnsemblPlants" id="AT3G05680.2">
    <property type="protein sequence ID" value="AT3G05680.2"/>
    <property type="gene ID" value="AT3G05680"/>
</dbReference>
<dbReference type="GeneID" id="819736"/>
<dbReference type="Gramene" id="AT3G05680.1">
    <property type="protein sequence ID" value="AT3G05680.1"/>
    <property type="gene ID" value="AT3G05680"/>
</dbReference>
<dbReference type="Gramene" id="AT3G05680.2">
    <property type="protein sequence ID" value="AT3G05680.2"/>
    <property type="gene ID" value="AT3G05680"/>
</dbReference>
<dbReference type="KEGG" id="ath:AT3G05680"/>
<dbReference type="Araport" id="AT3G05680"/>
<dbReference type="TAIR" id="AT3G05680">
    <property type="gene designation" value="EMB2016"/>
</dbReference>
<dbReference type="eggNOG" id="KOG4822">
    <property type="taxonomic scope" value="Eukaryota"/>
</dbReference>
<dbReference type="HOGENOM" id="CLU_001542_0_0_1"/>
<dbReference type="InParanoid" id="F4J8G7"/>
<dbReference type="OMA" id="WIGFAID"/>
<dbReference type="PRO" id="PR:F4J8G7"/>
<dbReference type="Proteomes" id="UP000006548">
    <property type="component" value="Chromosome 3"/>
</dbReference>
<dbReference type="ExpressionAtlas" id="F4J8G7">
    <property type="expression patterns" value="baseline and differential"/>
</dbReference>
<dbReference type="GO" id="GO:0016607">
    <property type="term" value="C:nuclear speck"/>
    <property type="evidence" value="ECO:0000314"/>
    <property type="project" value="TAIR"/>
</dbReference>
<dbReference type="GO" id="GO:0005654">
    <property type="term" value="C:nucleoplasm"/>
    <property type="evidence" value="ECO:0000314"/>
    <property type="project" value="TAIR"/>
</dbReference>
<dbReference type="GO" id="GO:0036396">
    <property type="term" value="C:RNA N6-methyladenosine methyltransferase complex"/>
    <property type="evidence" value="ECO:0000314"/>
    <property type="project" value="UniProtKB"/>
</dbReference>
<dbReference type="GO" id="GO:0008174">
    <property type="term" value="F:mRNA methyltransferase activity"/>
    <property type="evidence" value="ECO:0000314"/>
    <property type="project" value="TAIR"/>
</dbReference>
<dbReference type="GO" id="GO:0009793">
    <property type="term" value="P:embryo development ending in seed dormancy"/>
    <property type="evidence" value="ECO:0000315"/>
    <property type="project" value="UniProtKB"/>
</dbReference>
<dbReference type="GO" id="GO:0006397">
    <property type="term" value="P:mRNA processing"/>
    <property type="evidence" value="ECO:0007669"/>
    <property type="project" value="UniProtKB-KW"/>
</dbReference>
<dbReference type="GO" id="GO:0009651">
    <property type="term" value="P:response to salt stress"/>
    <property type="evidence" value="ECO:0000315"/>
    <property type="project" value="TAIR"/>
</dbReference>
<dbReference type="GO" id="GO:0008380">
    <property type="term" value="P:RNA splicing"/>
    <property type="evidence" value="ECO:0007669"/>
    <property type="project" value="UniProtKB-KW"/>
</dbReference>
<dbReference type="InterPro" id="IPR031801">
    <property type="entry name" value="VIR_N"/>
</dbReference>
<dbReference type="InterPro" id="IPR026736">
    <property type="entry name" value="Virilizer"/>
</dbReference>
<dbReference type="PANTHER" id="PTHR23185">
    <property type="entry name" value="PROTEIN VIRILIZER HOMOLOG"/>
    <property type="match status" value="1"/>
</dbReference>
<dbReference type="PANTHER" id="PTHR23185:SF0">
    <property type="entry name" value="PROTEIN VIRILIZER HOMOLOG"/>
    <property type="match status" value="1"/>
</dbReference>
<dbReference type="Pfam" id="PF15912">
    <property type="entry name" value="VIR_N"/>
    <property type="match status" value="1"/>
</dbReference>
<accession>F4J8G7</accession>
<accession>F4J8G6</accession>
<accession>Q9M9X3</accession>
<keyword id="KW-0507">mRNA processing</keyword>
<keyword id="KW-0508">mRNA splicing</keyword>
<keyword id="KW-0539">Nucleus</keyword>
<keyword id="KW-1185">Reference proteome</keyword>
<protein>
    <recommendedName>
        <fullName evidence="5">Protein virilizer homolog</fullName>
    </recommendedName>
    <alternativeName>
        <fullName evidence="3">Protein EMBRYO DEFECTIVE 2016</fullName>
    </alternativeName>
</protein>
<sequence length="2138" mass="234225">MVRSEPCVLFAQTFVHPQLDEYVDEVIFAEPVIITACEFLEQNASSSSQAVSLVGATSPPSFALEVFVRCEGESKFKRLCNPFLYTPSAPYPLEVEAVVTNHLVVRGSYRSLSLIVYGNIVKDLGQYNIILEGRSVTDIVSSTEGNLEDLPLVLHSVNRTIEECLSSLDIVSLPLAAVDLPVEVKRLLQLLLKIFDKLATNDVVNKFVDTVVSGVSSYVTDNVDFFLKNKNCSAVTSSLDSGLFHDIVDRVKEDILDLNEIQESDVALGLFSFLESETYLATSQQLVVMLSPYIQFERDSLCTVLPKLSKGKATLLGLSLAFLLCSGREGCLQFVNSGGMDQLVYLFGHDGQNSTTITLLLLGVVEQATRHSVGCEGFLGWWPREDGSIPSGKSEGYCLLLKLLMQKPCHEIASLAIYILRRLRIYEVISRYEFAVLSALEGLSNSHGAATHNLNMLSDAKSQLQKLQNLMKSLGSVEDPSPSAYAERSLVSDHSEGWLSYKATSKLTSSWTCPFYSSGIDSHILALLKERGFLPLSAALLSMPELHSKVGDIMDVFTDIAMFIGNIILSFMFSRTGLSFLLHHPELTATIIQSLKGSVDLNKEECVPLHYASILISKGFTCSLLEIGINLEMHLRVVSAVDRLLKSIQQTEEFLWILWELRDVSRSDCGREALLTLGVFPEALAVLIEALHSAKDMEPAVENSGISPLNLAICHSAAEIFEVIVSDSTASCLHAWIEHAPVLHKALHTLSPGGSNRKDAPSRLLKWIDAGVVYHKHGVGGLLRYAAVLASGGDAQLSSSSILALDLTPAENGAGESTNVSEMNVLDNLGKVIFEKSFEGVNLSDSSISQLTTALRILALISDNSTVAAALYDEGAVTVVYAILVNCSFMFERSSNIYDYLVDDDHGCSSISDFLSERNREQSLVDLLIPSLVLLISVLQRLQGTKEQYRNTKLMKALLRLHREVSPKLAACAADLSSHYPDSALGFGAVCHLIVSALVCWPVYGWIPGLFHTLLSGVQTSSVPALGPKETCSFLCILSDILPEEGVWFWKSGMPLLSGLRKLAVGTLMGPQKEKQINWYLEPGPLEKLINHLTPNLDKIAKIIQHHAVSALVVIQDMLRVFIVRIACQRVEHASILLRPIFSSIRDGILDQSSTRDTEAYMVYRYLNFLASLLEHPHAKGLLLEEGIVQLLVEVLERCYDATYPSENRVLEYGIVSASSVIQWCIPAFRSISLLCDSQVPLLCFQKKELLASLSAKDCALIFPFVLKFCQVLPVGNELLSCLGAFKDLSSCGEGQDGLVSLLFHLFSGTEESVSERWCDTNSLSLDQLDMKKNPPFLSCWIKLLNSINSKDGLSSLAMKAVNVLSVGSIRLCLDGKSLDSKKVAALKSLFGLPSEFSGTDTFREENIGLIEQMVTLLSSMTSGSDSSATAEMKPYLHEASQSLLSLLKDGNIDDIISCKGVFVSPGNLDMDDLVSRNIEDDLYQRGLEDKFWWECPETLPERLPQSSLPAKRKLPTLESSSRRAKGENSSVDIPTQNSIQRGMGSVSLPPAPTRRDAFRQRKPNTSRPPSMHVDDYVARERSVDTAGNSNAITISRAGSSSGRPPSIHVDEFMARQRERGQNPSTIVVGEAVVQVKNPTPARDTEKVAGKPKQFKADPDDDLQGIDIVFDGEECEGPDDKLPFLQPDENLMQPAPVMVEQNSPHSIVEETESDANGSSQFSHMGTPVASNVDENAQSEFSSRISVSRPEMSLIREPSISSDRKFVEQADEAKKMAPLKSAGISESGFIPAYHMPGSSGQNSIDPRVGPQGFYSKSGQQHTGHIHGGFSGRGVYEQKVMPNQPPLPLVPPPSVSPVIPHSSDSLSNQSSPFISHGTQSSGGPTRLMPPLPSAIPQYSSNPYASLPPRTSTVQSFGYNHAGVGTTEQQQSGPTIDHQSGNLSVTGMTSYPPPNLMPSHNFSRPSSLPVPFYGNPSHQGGDKPQTMLLVPSIPQSLNTQSIPQLPSMQLSQLQRPMQPPQHVRPPIQISQPSEQGVSMQNPFQIPMHQMQLMQQTQVQPYYHPPQQQEISQVQQQQQHHAVQGQQGAGTSQQQESGMSLHDYFKSPEAIQALLSDRDKLCQLLEQHPKLMQMLQEKLGQL</sequence>
<name>VIR_ARATH</name>